<sequence length="174" mass="19146">MTVSCPPPSTSEREEQARALCLRLLTARSRTRAELAGQLAKRGYPEDIGNRVLDRLAAVGLVDDTDFAEQWVQSRRANAAKSKRALAAELHAKGVDDDVITTVLGGIDAGAERGRAEKLVRARLRREVLIDDGTDEARVSRRLVAMLARRGYGQTLACEVVIAELAAERERRRV</sequence>
<gene>
    <name type="primary">recX</name>
    <name type="ordered locus">MT2805</name>
</gene>
<name>RECX_MYCTO</name>
<accession>P9WHI0</accession>
<accession>L0TC39</accession>
<accession>O33280</accession>
<accession>P0A5U8</accession>
<reference key="1">
    <citation type="journal article" date="2002" name="J. Bacteriol.">
        <title>Whole-genome comparison of Mycobacterium tuberculosis clinical and laboratory strains.</title>
        <authorList>
            <person name="Fleischmann R.D."/>
            <person name="Alland D."/>
            <person name="Eisen J.A."/>
            <person name="Carpenter L."/>
            <person name="White O."/>
            <person name="Peterson J.D."/>
            <person name="DeBoy R.T."/>
            <person name="Dodson R.J."/>
            <person name="Gwinn M.L."/>
            <person name="Haft D.H."/>
            <person name="Hickey E.K."/>
            <person name="Kolonay J.F."/>
            <person name="Nelson W.C."/>
            <person name="Umayam L.A."/>
            <person name="Ermolaeva M.D."/>
            <person name="Salzberg S.L."/>
            <person name="Delcher A."/>
            <person name="Utterback T.R."/>
            <person name="Weidman J.F."/>
            <person name="Khouri H.M."/>
            <person name="Gill J."/>
            <person name="Mikula A."/>
            <person name="Bishai W."/>
            <person name="Jacobs W.R. Jr."/>
            <person name="Venter J.C."/>
            <person name="Fraser C.M."/>
        </authorList>
    </citation>
    <scope>NUCLEOTIDE SEQUENCE [LARGE SCALE GENOMIC DNA]</scope>
    <source>
        <strain>CDC 1551 / Oshkosh</strain>
    </source>
</reference>
<dbReference type="EMBL" id="AE000516">
    <property type="protein sequence ID" value="AAK47126.1"/>
    <property type="status" value="ALT_INIT"/>
    <property type="molecule type" value="Genomic_DNA"/>
</dbReference>
<dbReference type="PIR" id="G70877">
    <property type="entry name" value="G70877"/>
</dbReference>
<dbReference type="RefSeq" id="WP_003900562.1">
    <property type="nucleotide sequence ID" value="NZ_KK341227.1"/>
</dbReference>
<dbReference type="SMR" id="P9WHI0"/>
<dbReference type="KEGG" id="mtc:MT2805"/>
<dbReference type="PATRIC" id="fig|83331.31.peg.3023"/>
<dbReference type="HOGENOM" id="CLU_066607_0_2_11"/>
<dbReference type="Proteomes" id="UP000001020">
    <property type="component" value="Chromosome"/>
</dbReference>
<dbReference type="GO" id="GO:0005737">
    <property type="term" value="C:cytoplasm"/>
    <property type="evidence" value="ECO:0007669"/>
    <property type="project" value="UniProtKB-SubCell"/>
</dbReference>
<dbReference type="GO" id="GO:0006282">
    <property type="term" value="P:regulation of DNA repair"/>
    <property type="evidence" value="ECO:0007669"/>
    <property type="project" value="UniProtKB-UniRule"/>
</dbReference>
<dbReference type="FunFam" id="1.10.10.10:FF:000656">
    <property type="entry name" value="Regulatory protein RecX"/>
    <property type="match status" value="1"/>
</dbReference>
<dbReference type="Gene3D" id="1.10.10.10">
    <property type="entry name" value="Winged helix-like DNA-binding domain superfamily/Winged helix DNA-binding domain"/>
    <property type="match status" value="2"/>
</dbReference>
<dbReference type="HAMAP" id="MF_01114">
    <property type="entry name" value="RecX"/>
    <property type="match status" value="1"/>
</dbReference>
<dbReference type="InterPro" id="IPR053926">
    <property type="entry name" value="RecX_HTH_1st"/>
</dbReference>
<dbReference type="InterPro" id="IPR053924">
    <property type="entry name" value="RecX_HTH_2nd"/>
</dbReference>
<dbReference type="InterPro" id="IPR003783">
    <property type="entry name" value="Regulatory_RecX"/>
</dbReference>
<dbReference type="InterPro" id="IPR036388">
    <property type="entry name" value="WH-like_DNA-bd_sf"/>
</dbReference>
<dbReference type="NCBIfam" id="NF001056">
    <property type="entry name" value="PRK00117.3-1"/>
    <property type="match status" value="1"/>
</dbReference>
<dbReference type="PANTHER" id="PTHR33602">
    <property type="entry name" value="REGULATORY PROTEIN RECX FAMILY PROTEIN"/>
    <property type="match status" value="1"/>
</dbReference>
<dbReference type="PANTHER" id="PTHR33602:SF1">
    <property type="entry name" value="REGULATORY PROTEIN RECX FAMILY PROTEIN"/>
    <property type="match status" value="1"/>
</dbReference>
<dbReference type="Pfam" id="PF21982">
    <property type="entry name" value="RecX_HTH1"/>
    <property type="match status" value="1"/>
</dbReference>
<dbReference type="Pfam" id="PF02631">
    <property type="entry name" value="RecX_HTH2"/>
    <property type="match status" value="1"/>
</dbReference>
<organism>
    <name type="scientific">Mycobacterium tuberculosis (strain CDC 1551 / Oshkosh)</name>
    <dbReference type="NCBI Taxonomy" id="83331"/>
    <lineage>
        <taxon>Bacteria</taxon>
        <taxon>Bacillati</taxon>
        <taxon>Actinomycetota</taxon>
        <taxon>Actinomycetes</taxon>
        <taxon>Mycobacteriales</taxon>
        <taxon>Mycobacteriaceae</taxon>
        <taxon>Mycobacterium</taxon>
        <taxon>Mycobacterium tuberculosis complex</taxon>
    </lineage>
</organism>
<protein>
    <recommendedName>
        <fullName>Regulatory protein RecX</fullName>
    </recommendedName>
</protein>
<keyword id="KW-0963">Cytoplasm</keyword>
<keyword id="KW-1185">Reference proteome</keyword>
<evidence type="ECO:0000250" key="1"/>
<evidence type="ECO:0000305" key="2"/>
<proteinExistence type="inferred from homology"/>
<feature type="chain" id="PRO_0000428183" description="Regulatory protein RecX">
    <location>
        <begin position="1"/>
        <end position="174"/>
    </location>
</feature>
<comment type="function">
    <text evidence="1">Binds to RecA inhibiting ATP hydrolysis and the generation of heteroduplex DNA. It might act as an anti-recombinase to quell inappropriate recombinational repair during normal DNA metabolism. It is essential for cell survival (By similarity).</text>
</comment>
<comment type="subcellular location">
    <subcellularLocation>
        <location evidence="2">Cytoplasm</location>
    </subcellularLocation>
</comment>
<comment type="similarity">
    <text evidence="2">Belongs to the RecX family.</text>
</comment>
<comment type="sequence caution" evidence="2">
    <conflict type="erroneous initiation">
        <sequence resource="EMBL-CDS" id="AAK47126"/>
    </conflict>
</comment>